<dbReference type="EC" id="3.4.23.36" evidence="1"/>
<dbReference type="EMBL" id="BX569692">
    <property type="protein sequence ID" value="CAE07594.1"/>
    <property type="molecule type" value="Genomic_DNA"/>
</dbReference>
<dbReference type="RefSeq" id="WP_011127944.1">
    <property type="nucleotide sequence ID" value="NC_005070.1"/>
</dbReference>
<dbReference type="SMR" id="Q7U7A6"/>
<dbReference type="STRING" id="84588.SYNW1079"/>
<dbReference type="KEGG" id="syw:SYNW1079"/>
<dbReference type="eggNOG" id="COG0597">
    <property type="taxonomic scope" value="Bacteria"/>
</dbReference>
<dbReference type="HOGENOM" id="CLU_083252_3_2_3"/>
<dbReference type="UniPathway" id="UPA00665"/>
<dbReference type="Proteomes" id="UP000001422">
    <property type="component" value="Chromosome"/>
</dbReference>
<dbReference type="GO" id="GO:0005886">
    <property type="term" value="C:plasma membrane"/>
    <property type="evidence" value="ECO:0007669"/>
    <property type="project" value="UniProtKB-SubCell"/>
</dbReference>
<dbReference type="GO" id="GO:0004190">
    <property type="term" value="F:aspartic-type endopeptidase activity"/>
    <property type="evidence" value="ECO:0007669"/>
    <property type="project" value="UniProtKB-UniRule"/>
</dbReference>
<dbReference type="GO" id="GO:0006508">
    <property type="term" value="P:proteolysis"/>
    <property type="evidence" value="ECO:0007669"/>
    <property type="project" value="UniProtKB-KW"/>
</dbReference>
<dbReference type="HAMAP" id="MF_00161">
    <property type="entry name" value="LspA"/>
    <property type="match status" value="1"/>
</dbReference>
<dbReference type="InterPro" id="IPR001872">
    <property type="entry name" value="Peptidase_A8"/>
</dbReference>
<dbReference type="NCBIfam" id="TIGR00077">
    <property type="entry name" value="lspA"/>
    <property type="match status" value="1"/>
</dbReference>
<dbReference type="PANTHER" id="PTHR33695">
    <property type="entry name" value="LIPOPROTEIN SIGNAL PEPTIDASE"/>
    <property type="match status" value="1"/>
</dbReference>
<dbReference type="PANTHER" id="PTHR33695:SF1">
    <property type="entry name" value="LIPOPROTEIN SIGNAL PEPTIDASE"/>
    <property type="match status" value="1"/>
</dbReference>
<dbReference type="Pfam" id="PF01252">
    <property type="entry name" value="Peptidase_A8"/>
    <property type="match status" value="1"/>
</dbReference>
<dbReference type="PRINTS" id="PR00781">
    <property type="entry name" value="LIPOSIGPTASE"/>
</dbReference>
<proteinExistence type="inferred from homology"/>
<sequence length="159" mass="17083">MTGSILRRAPLLGVAGLVVLVDQATKLLAASQLADGRIVQLLPGLINGQLVHNTGAAFSLFRGSVQWLGLLSLAVTTGLLIWVVRHRTPPFWQGMAVAFLLGGTLGNGIDRWRLGHVIDFLALVPINFPIFNPADIAINLAVLCFLVDLWSSRTSSRHG</sequence>
<feature type="chain" id="PRO_0000289451" description="Lipoprotein signal peptidase">
    <location>
        <begin position="1"/>
        <end position="159"/>
    </location>
</feature>
<feature type="transmembrane region" description="Helical" evidence="1">
    <location>
        <begin position="64"/>
        <end position="84"/>
    </location>
</feature>
<feature type="transmembrane region" description="Helical" evidence="1">
    <location>
        <begin position="89"/>
        <end position="109"/>
    </location>
</feature>
<feature type="transmembrane region" description="Helical" evidence="1">
    <location>
        <begin position="130"/>
        <end position="150"/>
    </location>
</feature>
<feature type="active site" evidence="1">
    <location>
        <position position="119"/>
    </location>
</feature>
<feature type="active site" evidence="1">
    <location>
        <position position="135"/>
    </location>
</feature>
<accession>Q7U7A6</accession>
<keyword id="KW-0064">Aspartyl protease</keyword>
<keyword id="KW-0997">Cell inner membrane</keyword>
<keyword id="KW-1003">Cell membrane</keyword>
<keyword id="KW-0378">Hydrolase</keyword>
<keyword id="KW-0472">Membrane</keyword>
<keyword id="KW-0645">Protease</keyword>
<keyword id="KW-0812">Transmembrane</keyword>
<keyword id="KW-1133">Transmembrane helix</keyword>
<gene>
    <name evidence="1" type="primary">lspA</name>
    <name type="ordered locus">SYNW1079</name>
</gene>
<protein>
    <recommendedName>
        <fullName evidence="1">Lipoprotein signal peptidase</fullName>
        <ecNumber evidence="1">3.4.23.36</ecNumber>
    </recommendedName>
    <alternativeName>
        <fullName evidence="1">Prolipoprotein signal peptidase</fullName>
    </alternativeName>
    <alternativeName>
        <fullName evidence="1">Signal peptidase II</fullName>
        <shortName evidence="1">SPase II</shortName>
    </alternativeName>
</protein>
<name>LSPA_PARMW</name>
<evidence type="ECO:0000255" key="1">
    <source>
        <dbReference type="HAMAP-Rule" id="MF_00161"/>
    </source>
</evidence>
<organism>
    <name type="scientific">Parasynechococcus marenigrum (strain WH8102)</name>
    <dbReference type="NCBI Taxonomy" id="84588"/>
    <lineage>
        <taxon>Bacteria</taxon>
        <taxon>Bacillati</taxon>
        <taxon>Cyanobacteriota</taxon>
        <taxon>Cyanophyceae</taxon>
        <taxon>Synechococcales</taxon>
        <taxon>Prochlorococcaceae</taxon>
        <taxon>Parasynechococcus</taxon>
        <taxon>Parasynechococcus marenigrum</taxon>
    </lineage>
</organism>
<comment type="function">
    <text evidence="1">This protein specifically catalyzes the removal of signal peptides from prolipoproteins.</text>
</comment>
<comment type="catalytic activity">
    <reaction evidence="1">
        <text>Release of signal peptides from bacterial membrane prolipoproteins. Hydrolyzes -Xaa-Yaa-Zaa-|-(S,diacylglyceryl)Cys-, in which Xaa is hydrophobic (preferably Leu), and Yaa (Ala or Ser) and Zaa (Gly or Ala) have small, neutral side chains.</text>
        <dbReference type="EC" id="3.4.23.36"/>
    </reaction>
</comment>
<comment type="pathway">
    <text evidence="1">Protein modification; lipoprotein biosynthesis (signal peptide cleavage).</text>
</comment>
<comment type="subcellular location">
    <subcellularLocation>
        <location evidence="1">Cell inner membrane</location>
        <topology evidence="1">Multi-pass membrane protein</topology>
    </subcellularLocation>
</comment>
<comment type="similarity">
    <text evidence="1">Belongs to the peptidase A8 family.</text>
</comment>
<reference key="1">
    <citation type="journal article" date="2003" name="Nature">
        <title>The genome of a motile marine Synechococcus.</title>
        <authorList>
            <person name="Palenik B."/>
            <person name="Brahamsha B."/>
            <person name="Larimer F.W."/>
            <person name="Land M.L."/>
            <person name="Hauser L."/>
            <person name="Chain P."/>
            <person name="Lamerdin J.E."/>
            <person name="Regala W."/>
            <person name="Allen E.E."/>
            <person name="McCarren J."/>
            <person name="Paulsen I.T."/>
            <person name="Dufresne A."/>
            <person name="Partensky F."/>
            <person name="Webb E.A."/>
            <person name="Waterbury J."/>
        </authorList>
    </citation>
    <scope>NUCLEOTIDE SEQUENCE [LARGE SCALE GENOMIC DNA]</scope>
    <source>
        <strain>WH8102</strain>
    </source>
</reference>